<name>GLO2_SHIF8</name>
<comment type="function">
    <text evidence="1">Thiolesterase that catalyzes the hydrolysis of S-D-lactoyl-glutathione to form glutathione and D-lactic acid.</text>
</comment>
<comment type="catalytic activity">
    <reaction evidence="1">
        <text>an S-(2-hydroxyacyl)glutathione + H2O = a 2-hydroxy carboxylate + glutathione + H(+)</text>
        <dbReference type="Rhea" id="RHEA:21864"/>
        <dbReference type="ChEBI" id="CHEBI:15377"/>
        <dbReference type="ChEBI" id="CHEBI:15378"/>
        <dbReference type="ChEBI" id="CHEBI:57925"/>
        <dbReference type="ChEBI" id="CHEBI:58896"/>
        <dbReference type="ChEBI" id="CHEBI:71261"/>
        <dbReference type="EC" id="3.1.2.6"/>
    </reaction>
</comment>
<comment type="cofactor">
    <cofactor evidence="1">
        <name>Zn(2+)</name>
        <dbReference type="ChEBI" id="CHEBI:29105"/>
    </cofactor>
    <text evidence="1">Binds 2 Zn(2+) ions per subunit.</text>
</comment>
<comment type="pathway">
    <text evidence="1">Secondary metabolite metabolism; methylglyoxal degradation; (R)-lactate from methylglyoxal: step 2/2.</text>
</comment>
<comment type="subunit">
    <text evidence="1">Monomer.</text>
</comment>
<comment type="similarity">
    <text evidence="1">Belongs to the metallo-beta-lactamase superfamily. Glyoxalase II family.</text>
</comment>
<dbReference type="EC" id="3.1.2.6" evidence="1"/>
<dbReference type="EMBL" id="CP000266">
    <property type="protein sequence ID" value="ABF02474.1"/>
    <property type="molecule type" value="Genomic_DNA"/>
</dbReference>
<dbReference type="RefSeq" id="WP_001052754.1">
    <property type="nucleotide sequence ID" value="NC_008258.1"/>
</dbReference>
<dbReference type="SMR" id="Q0T802"/>
<dbReference type="KEGG" id="sfv:SFV_0196"/>
<dbReference type="HOGENOM" id="CLU_030571_4_1_6"/>
<dbReference type="UniPathway" id="UPA00619">
    <property type="reaction ID" value="UER00676"/>
</dbReference>
<dbReference type="Proteomes" id="UP000000659">
    <property type="component" value="Chromosome"/>
</dbReference>
<dbReference type="GO" id="GO:0004416">
    <property type="term" value="F:hydroxyacylglutathione hydrolase activity"/>
    <property type="evidence" value="ECO:0007669"/>
    <property type="project" value="UniProtKB-UniRule"/>
</dbReference>
<dbReference type="GO" id="GO:0046872">
    <property type="term" value="F:metal ion binding"/>
    <property type="evidence" value="ECO:0007669"/>
    <property type="project" value="UniProtKB-KW"/>
</dbReference>
<dbReference type="GO" id="GO:0019243">
    <property type="term" value="P:methylglyoxal catabolic process to D-lactate via S-lactoyl-glutathione"/>
    <property type="evidence" value="ECO:0007669"/>
    <property type="project" value="InterPro"/>
</dbReference>
<dbReference type="CDD" id="cd07723">
    <property type="entry name" value="hydroxyacylglutathione_hydrolase_MBL-fold"/>
    <property type="match status" value="1"/>
</dbReference>
<dbReference type="Gene3D" id="3.60.15.10">
    <property type="entry name" value="Ribonuclease Z/Hydroxyacylglutathione hydrolase-like"/>
    <property type="match status" value="1"/>
</dbReference>
<dbReference type="HAMAP" id="MF_01374">
    <property type="entry name" value="Glyoxalase_2"/>
    <property type="match status" value="1"/>
</dbReference>
<dbReference type="InterPro" id="IPR035680">
    <property type="entry name" value="Clx_II_MBL"/>
</dbReference>
<dbReference type="InterPro" id="IPR050110">
    <property type="entry name" value="Glyoxalase_II_hydrolase"/>
</dbReference>
<dbReference type="InterPro" id="IPR032282">
    <property type="entry name" value="HAGH_C"/>
</dbReference>
<dbReference type="InterPro" id="IPR017782">
    <property type="entry name" value="Hydroxyacylglutathione_Hdrlase"/>
</dbReference>
<dbReference type="InterPro" id="IPR001279">
    <property type="entry name" value="Metallo-B-lactamas"/>
</dbReference>
<dbReference type="InterPro" id="IPR036866">
    <property type="entry name" value="RibonucZ/Hydroxyglut_hydro"/>
</dbReference>
<dbReference type="NCBIfam" id="TIGR03413">
    <property type="entry name" value="GSH_gloB"/>
    <property type="match status" value="1"/>
</dbReference>
<dbReference type="NCBIfam" id="NF007597">
    <property type="entry name" value="PRK10241.1"/>
    <property type="match status" value="1"/>
</dbReference>
<dbReference type="PANTHER" id="PTHR43705">
    <property type="entry name" value="HYDROXYACYLGLUTATHIONE HYDROLASE"/>
    <property type="match status" value="1"/>
</dbReference>
<dbReference type="PANTHER" id="PTHR43705:SF1">
    <property type="entry name" value="HYDROXYACYLGLUTATHIONE HYDROLASE GLOB"/>
    <property type="match status" value="1"/>
</dbReference>
<dbReference type="Pfam" id="PF16123">
    <property type="entry name" value="HAGH_C"/>
    <property type="match status" value="1"/>
</dbReference>
<dbReference type="Pfam" id="PF00753">
    <property type="entry name" value="Lactamase_B"/>
    <property type="match status" value="1"/>
</dbReference>
<dbReference type="PIRSF" id="PIRSF005457">
    <property type="entry name" value="Glx"/>
    <property type="match status" value="1"/>
</dbReference>
<dbReference type="SMART" id="SM00849">
    <property type="entry name" value="Lactamase_B"/>
    <property type="match status" value="1"/>
</dbReference>
<dbReference type="SUPFAM" id="SSF56281">
    <property type="entry name" value="Metallo-hydrolase/oxidoreductase"/>
    <property type="match status" value="1"/>
</dbReference>
<organism>
    <name type="scientific">Shigella flexneri serotype 5b (strain 8401)</name>
    <dbReference type="NCBI Taxonomy" id="373384"/>
    <lineage>
        <taxon>Bacteria</taxon>
        <taxon>Pseudomonadati</taxon>
        <taxon>Pseudomonadota</taxon>
        <taxon>Gammaproteobacteria</taxon>
        <taxon>Enterobacterales</taxon>
        <taxon>Enterobacteriaceae</taxon>
        <taxon>Shigella</taxon>
    </lineage>
</organism>
<feature type="chain" id="PRO_0000309708" description="Hydroxyacylglutathione hydrolase">
    <location>
        <begin position="1"/>
        <end position="251"/>
    </location>
</feature>
<feature type="binding site" evidence="1">
    <location>
        <position position="53"/>
    </location>
    <ligand>
        <name>Zn(2+)</name>
        <dbReference type="ChEBI" id="CHEBI:29105"/>
        <label>1</label>
    </ligand>
</feature>
<feature type="binding site" evidence="1">
    <location>
        <position position="55"/>
    </location>
    <ligand>
        <name>Zn(2+)</name>
        <dbReference type="ChEBI" id="CHEBI:29105"/>
        <label>1</label>
    </ligand>
</feature>
<feature type="binding site" evidence="1">
    <location>
        <position position="57"/>
    </location>
    <ligand>
        <name>Zn(2+)</name>
        <dbReference type="ChEBI" id="CHEBI:29105"/>
        <label>2</label>
    </ligand>
</feature>
<feature type="binding site" evidence="1">
    <location>
        <position position="58"/>
    </location>
    <ligand>
        <name>Zn(2+)</name>
        <dbReference type="ChEBI" id="CHEBI:29105"/>
        <label>2</label>
    </ligand>
</feature>
<feature type="binding site" evidence="1">
    <location>
        <position position="110"/>
    </location>
    <ligand>
        <name>Zn(2+)</name>
        <dbReference type="ChEBI" id="CHEBI:29105"/>
        <label>1</label>
    </ligand>
</feature>
<feature type="binding site" evidence="1">
    <location>
        <position position="127"/>
    </location>
    <ligand>
        <name>Zn(2+)</name>
        <dbReference type="ChEBI" id="CHEBI:29105"/>
        <label>1</label>
    </ligand>
</feature>
<feature type="binding site" evidence="1">
    <location>
        <position position="127"/>
    </location>
    <ligand>
        <name>Zn(2+)</name>
        <dbReference type="ChEBI" id="CHEBI:29105"/>
        <label>2</label>
    </ligand>
</feature>
<feature type="binding site" evidence="1">
    <location>
        <position position="165"/>
    </location>
    <ligand>
        <name>Zn(2+)</name>
        <dbReference type="ChEBI" id="CHEBI:29105"/>
        <label>2</label>
    </ligand>
</feature>
<evidence type="ECO:0000255" key="1">
    <source>
        <dbReference type="HAMAP-Rule" id="MF_01374"/>
    </source>
</evidence>
<proteinExistence type="inferred from homology"/>
<gene>
    <name evidence="1" type="primary">gloB</name>
    <name type="ordered locus">SFV_0196</name>
</gene>
<protein>
    <recommendedName>
        <fullName evidence="1">Hydroxyacylglutathione hydrolase</fullName>
        <ecNumber evidence="1">3.1.2.6</ecNumber>
    </recommendedName>
    <alternativeName>
        <fullName evidence="1">Glyoxalase II</fullName>
        <shortName evidence="1">Glx II</shortName>
    </alternativeName>
</protein>
<reference key="1">
    <citation type="journal article" date="2006" name="BMC Genomics">
        <title>Complete genome sequence of Shigella flexneri 5b and comparison with Shigella flexneri 2a.</title>
        <authorList>
            <person name="Nie H."/>
            <person name="Yang F."/>
            <person name="Zhang X."/>
            <person name="Yang J."/>
            <person name="Chen L."/>
            <person name="Wang J."/>
            <person name="Xiong Z."/>
            <person name="Peng J."/>
            <person name="Sun L."/>
            <person name="Dong J."/>
            <person name="Xue Y."/>
            <person name="Xu X."/>
            <person name="Chen S."/>
            <person name="Yao Z."/>
            <person name="Shen Y."/>
            <person name="Jin Q."/>
        </authorList>
    </citation>
    <scope>NUCLEOTIDE SEQUENCE [LARGE SCALE GENOMIC DNA]</scope>
    <source>
        <strain>8401</strain>
    </source>
</reference>
<sequence length="251" mass="28512">MNLNSIPAFDDNYIWVLNDEAGRCLIVDPGDAEPVLNAITANNWQPEAIFLTHHHHDHVGGVKELVEKFPQIVVYGPQETQDKGTTQVVKDGETAFVLGHEFSVITTPGHTLGHICYFSKPYLFCGDTLFSGGCGRLFEGTALQMYQSLKKLSALPDDTLVCCAHEYTLSNMKFALSIFPHDLSINDYYRKVKELRAKNQITLPVILKNERQINVFLRTEDIDLINGINEETLLQQPEERFAWLRSKKDRF</sequence>
<accession>Q0T802</accession>
<keyword id="KW-0378">Hydrolase</keyword>
<keyword id="KW-0479">Metal-binding</keyword>
<keyword id="KW-0862">Zinc</keyword>